<dbReference type="EMBL" id="BX936450">
    <property type="status" value="NOT_ANNOTATED_CDS"/>
    <property type="molecule type" value="Genomic_DNA"/>
</dbReference>
<dbReference type="EMBL" id="BC163252">
    <property type="protein sequence ID" value="AAI63252.1"/>
    <property type="molecule type" value="mRNA"/>
</dbReference>
<dbReference type="EMBL" id="BK005157">
    <property type="protein sequence ID" value="DAA05218.1"/>
    <property type="molecule type" value="mRNA"/>
</dbReference>
<dbReference type="SMR" id="Q52KB5"/>
<dbReference type="FunCoup" id="Q52KB5">
    <property type="interactions" value="1460"/>
</dbReference>
<dbReference type="STRING" id="7955.ENSDARP00000099482"/>
<dbReference type="PaxDb" id="7955-ENSDARP00000076252"/>
<dbReference type="AGR" id="ZFIN:ZDB-GENE-081022-123"/>
<dbReference type="ZFIN" id="ZDB-GENE-081022-123">
    <property type="gene designation" value="zbtb24"/>
</dbReference>
<dbReference type="eggNOG" id="KOG1721">
    <property type="taxonomic scope" value="Eukaryota"/>
</dbReference>
<dbReference type="InParanoid" id="Q52KB5"/>
<dbReference type="PhylomeDB" id="Q52KB5"/>
<dbReference type="TreeFam" id="TF332049"/>
<dbReference type="PRO" id="PR:Q52KB5"/>
<dbReference type="Proteomes" id="UP000000437">
    <property type="component" value="Unplaced"/>
</dbReference>
<dbReference type="GO" id="GO:0005654">
    <property type="term" value="C:nucleoplasm"/>
    <property type="evidence" value="ECO:0000318"/>
    <property type="project" value="GO_Central"/>
</dbReference>
<dbReference type="GO" id="GO:0003700">
    <property type="term" value="F:DNA-binding transcription factor activity"/>
    <property type="evidence" value="ECO:0000303"/>
    <property type="project" value="UniProtKB"/>
</dbReference>
<dbReference type="GO" id="GO:0001227">
    <property type="term" value="F:DNA-binding transcription repressor activity, RNA polymerase II-specific"/>
    <property type="evidence" value="ECO:0000318"/>
    <property type="project" value="GO_Central"/>
</dbReference>
<dbReference type="GO" id="GO:0000978">
    <property type="term" value="F:RNA polymerase II cis-regulatory region sequence-specific DNA binding"/>
    <property type="evidence" value="ECO:0000318"/>
    <property type="project" value="GO_Central"/>
</dbReference>
<dbReference type="GO" id="GO:0008270">
    <property type="term" value="F:zinc ion binding"/>
    <property type="evidence" value="ECO:0007669"/>
    <property type="project" value="UniProtKB-KW"/>
</dbReference>
<dbReference type="GO" id="GO:0000122">
    <property type="term" value="P:negative regulation of transcription by RNA polymerase II"/>
    <property type="evidence" value="ECO:0000318"/>
    <property type="project" value="GO_Central"/>
</dbReference>
<dbReference type="GO" id="GO:0001817">
    <property type="term" value="P:regulation of cytokine production"/>
    <property type="evidence" value="ECO:0000318"/>
    <property type="project" value="GO_Central"/>
</dbReference>
<dbReference type="GO" id="GO:0006355">
    <property type="term" value="P:regulation of DNA-templated transcription"/>
    <property type="evidence" value="ECO:0000303"/>
    <property type="project" value="UniProtKB"/>
</dbReference>
<dbReference type="GO" id="GO:0002682">
    <property type="term" value="P:regulation of immune system process"/>
    <property type="evidence" value="ECO:0000318"/>
    <property type="project" value="GO_Central"/>
</dbReference>
<dbReference type="FunFam" id="3.30.160.60:FF:000965">
    <property type="entry name" value="Neurotrophin receptor-interacting factor homolog"/>
    <property type="match status" value="1"/>
</dbReference>
<dbReference type="FunFam" id="3.30.160.60:FF:000100">
    <property type="entry name" value="Zinc finger 45-like"/>
    <property type="match status" value="1"/>
</dbReference>
<dbReference type="FunFam" id="3.30.160.60:FF:000267">
    <property type="entry name" value="Zinc finger and BTB domain-containing 49"/>
    <property type="match status" value="1"/>
</dbReference>
<dbReference type="FunFam" id="3.30.160.60:FF:001506">
    <property type="entry name" value="Zinc finger protein"/>
    <property type="match status" value="1"/>
</dbReference>
<dbReference type="FunFam" id="3.30.160.60:FF:002716">
    <property type="entry name" value="Zinc finger protein 212"/>
    <property type="match status" value="1"/>
</dbReference>
<dbReference type="FunFam" id="3.30.160.60:FF:002343">
    <property type="entry name" value="Zinc finger protein 33A"/>
    <property type="match status" value="1"/>
</dbReference>
<dbReference type="FunFam" id="3.30.160.60:FF:000624">
    <property type="entry name" value="zinc finger protein 697"/>
    <property type="match status" value="1"/>
</dbReference>
<dbReference type="Gene3D" id="3.30.160.60">
    <property type="entry name" value="Classic Zinc Finger"/>
    <property type="match status" value="8"/>
</dbReference>
<dbReference type="Gene3D" id="3.30.710.10">
    <property type="entry name" value="Potassium Channel Kv1.1, Chain A"/>
    <property type="match status" value="1"/>
</dbReference>
<dbReference type="InterPro" id="IPR000210">
    <property type="entry name" value="BTB/POZ_dom"/>
</dbReference>
<dbReference type="InterPro" id="IPR011333">
    <property type="entry name" value="SKP1/BTB/POZ_sf"/>
</dbReference>
<dbReference type="InterPro" id="IPR036236">
    <property type="entry name" value="Znf_C2H2_sf"/>
</dbReference>
<dbReference type="InterPro" id="IPR013087">
    <property type="entry name" value="Znf_C2H2_type"/>
</dbReference>
<dbReference type="InterPro" id="IPR050457">
    <property type="entry name" value="ZnFinger_BTB_dom_contain"/>
</dbReference>
<dbReference type="PANTHER" id="PTHR46105">
    <property type="entry name" value="AGAP004733-PA"/>
    <property type="match status" value="1"/>
</dbReference>
<dbReference type="PANTHER" id="PTHR46105:SF31">
    <property type="entry name" value="LOW QUALITY PROTEIN: ZINC FINGER PROTEIN 721-RELATED"/>
    <property type="match status" value="1"/>
</dbReference>
<dbReference type="Pfam" id="PF00651">
    <property type="entry name" value="BTB"/>
    <property type="match status" value="1"/>
</dbReference>
<dbReference type="Pfam" id="PF00096">
    <property type="entry name" value="zf-C2H2"/>
    <property type="match status" value="8"/>
</dbReference>
<dbReference type="SMART" id="SM00225">
    <property type="entry name" value="BTB"/>
    <property type="match status" value="1"/>
</dbReference>
<dbReference type="SMART" id="SM00355">
    <property type="entry name" value="ZnF_C2H2"/>
    <property type="match status" value="8"/>
</dbReference>
<dbReference type="SUPFAM" id="SSF57667">
    <property type="entry name" value="beta-beta-alpha zinc fingers"/>
    <property type="match status" value="4"/>
</dbReference>
<dbReference type="SUPFAM" id="SSF54695">
    <property type="entry name" value="POZ domain"/>
    <property type="match status" value="1"/>
</dbReference>
<dbReference type="PROSITE" id="PS50097">
    <property type="entry name" value="BTB"/>
    <property type="match status" value="1"/>
</dbReference>
<dbReference type="PROSITE" id="PS00028">
    <property type="entry name" value="ZINC_FINGER_C2H2_1"/>
    <property type="match status" value="8"/>
</dbReference>
<dbReference type="PROSITE" id="PS50157">
    <property type="entry name" value="ZINC_FINGER_C2H2_2"/>
    <property type="match status" value="8"/>
</dbReference>
<protein>
    <recommendedName>
        <fullName>Zinc finger and BTB domain-containing protein 24</fullName>
    </recommendedName>
    <alternativeName>
        <fullName>Zinc finger protein 450</fullName>
    </alternativeName>
</protein>
<proteinExistence type="evidence at transcript level"/>
<gene>
    <name type="primary">zbtb24</name>
    <name type="synonym">zfp450</name>
    <name type="ORF">zgc:194556</name>
</gene>
<keyword id="KW-0238">DNA-binding</keyword>
<keyword id="KW-0479">Metal-binding</keyword>
<keyword id="KW-0539">Nucleus</keyword>
<keyword id="KW-1185">Reference proteome</keyword>
<keyword id="KW-0677">Repeat</keyword>
<keyword id="KW-0804">Transcription</keyword>
<keyword id="KW-0805">Transcription regulation</keyword>
<keyword id="KW-0862">Zinc</keyword>
<keyword id="KW-0863">Zinc-finger</keyword>
<sequence>MSALPPSSSSPAVLALHSATHKDTILHKFDTLRRSELLCDITLIVEDVHFKAHKALLAASSEYFSALFTAEEQVSQSLYKLDGMTANTFSSVLEFMYSAVVLVDESSSEQLMEMARFLVIPDLIKAHEDLQAVDEHMQVKRKRGRPKKNQDLSQKENPESELQAQTSSEIQEVNEEPASPATDGSDGEFNPREERRREGKRKIKQPIRLKGFRMDDLMEGKEPGKRGRRRKYPDTEARCEECGKVFKSHLFLKIHQRTHTGEKPFRCSVCGKEFTQKHTLLVHQRMHTGEKPYICTVCSKALSTKHSLLEHMNLHTENKLFTCEECGKSFSQQRQLKSHNRVHTGKGLPECAECHHKFMDAAQLKKHLRTHTGEKPFTCEICGKCFTAKSTLQTHIRIHRGEKPYVCKVCDKTFSDPSARRRHEVSHTGKKTFSCSICKVSFARKDNLKAHIKTHNKENPPAQAESTDKPPQSAPEQQEQEQQQQQQTSGDKELHSILQLQPFQLPAHGEQEIQLLVTGENLSLDQEQSISIITSEDTEQSLALLTQPSGHVQNLAVVTPDGNAQIQTISVLGGEVNGGDPEQMHVITLSKEAMEQLQVHHGAPQQLQVIHQLSEEQTGPVAGIHISGQSGQAISISQTTEQIPSDQIQGQTFQIQAGTVSYLYTTSMNPQN</sequence>
<organism>
    <name type="scientific">Danio rerio</name>
    <name type="common">Zebrafish</name>
    <name type="synonym">Brachydanio rerio</name>
    <dbReference type="NCBI Taxonomy" id="7955"/>
    <lineage>
        <taxon>Eukaryota</taxon>
        <taxon>Metazoa</taxon>
        <taxon>Chordata</taxon>
        <taxon>Craniata</taxon>
        <taxon>Vertebrata</taxon>
        <taxon>Euteleostomi</taxon>
        <taxon>Actinopterygii</taxon>
        <taxon>Neopterygii</taxon>
        <taxon>Teleostei</taxon>
        <taxon>Ostariophysi</taxon>
        <taxon>Cypriniformes</taxon>
        <taxon>Danionidae</taxon>
        <taxon>Danioninae</taxon>
        <taxon>Danio</taxon>
    </lineage>
</organism>
<evidence type="ECO:0000250" key="1">
    <source>
        <dbReference type="UniProtKB" id="Q80X44"/>
    </source>
</evidence>
<evidence type="ECO:0000255" key="2"/>
<evidence type="ECO:0000255" key="3">
    <source>
        <dbReference type="PROSITE-ProRule" id="PRU00037"/>
    </source>
</evidence>
<evidence type="ECO:0000255" key="4">
    <source>
        <dbReference type="PROSITE-ProRule" id="PRU00042"/>
    </source>
</evidence>
<evidence type="ECO:0000256" key="5">
    <source>
        <dbReference type="SAM" id="MobiDB-lite"/>
    </source>
</evidence>
<evidence type="ECO:0000305" key="6"/>
<evidence type="ECO:0000312" key="7">
    <source>
        <dbReference type="EMBL" id="DAA05218.1"/>
    </source>
</evidence>
<comment type="function">
    <text evidence="1">May be involved in BMP2-induced transcription.</text>
</comment>
<comment type="subcellular location">
    <subcellularLocation>
        <location evidence="6">Nucleus</location>
    </subcellularLocation>
</comment>
<comment type="similarity">
    <text evidence="2">Belongs to the krueppel C2H2-type zinc-finger protein family.</text>
</comment>
<accession>Q52KB5</accession>
<accession>B3DIU4</accession>
<reference key="1">
    <citation type="journal article" date="2013" name="Nature">
        <title>The zebrafish reference genome sequence and its relationship to the human genome.</title>
        <authorList>
            <person name="Howe K."/>
            <person name="Clark M.D."/>
            <person name="Torroja C.F."/>
            <person name="Torrance J."/>
            <person name="Berthelot C."/>
            <person name="Muffato M."/>
            <person name="Collins J.E."/>
            <person name="Humphray S."/>
            <person name="McLaren K."/>
            <person name="Matthews L."/>
            <person name="McLaren S."/>
            <person name="Sealy I."/>
            <person name="Caccamo M."/>
            <person name="Churcher C."/>
            <person name="Scott C."/>
            <person name="Barrett J.C."/>
            <person name="Koch R."/>
            <person name="Rauch G.J."/>
            <person name="White S."/>
            <person name="Chow W."/>
            <person name="Kilian B."/>
            <person name="Quintais L.T."/>
            <person name="Guerra-Assuncao J.A."/>
            <person name="Zhou Y."/>
            <person name="Gu Y."/>
            <person name="Yen J."/>
            <person name="Vogel J.H."/>
            <person name="Eyre T."/>
            <person name="Redmond S."/>
            <person name="Banerjee R."/>
            <person name="Chi J."/>
            <person name="Fu B."/>
            <person name="Langley E."/>
            <person name="Maguire S.F."/>
            <person name="Laird G.K."/>
            <person name="Lloyd D."/>
            <person name="Kenyon E."/>
            <person name="Donaldson S."/>
            <person name="Sehra H."/>
            <person name="Almeida-King J."/>
            <person name="Loveland J."/>
            <person name="Trevanion S."/>
            <person name="Jones M."/>
            <person name="Quail M."/>
            <person name="Willey D."/>
            <person name="Hunt A."/>
            <person name="Burton J."/>
            <person name="Sims S."/>
            <person name="McLay K."/>
            <person name="Plumb B."/>
            <person name="Davis J."/>
            <person name="Clee C."/>
            <person name="Oliver K."/>
            <person name="Clark R."/>
            <person name="Riddle C."/>
            <person name="Elliot D."/>
            <person name="Threadgold G."/>
            <person name="Harden G."/>
            <person name="Ware D."/>
            <person name="Begum S."/>
            <person name="Mortimore B."/>
            <person name="Kerry G."/>
            <person name="Heath P."/>
            <person name="Phillimore B."/>
            <person name="Tracey A."/>
            <person name="Corby N."/>
            <person name="Dunn M."/>
            <person name="Johnson C."/>
            <person name="Wood J."/>
            <person name="Clark S."/>
            <person name="Pelan S."/>
            <person name="Griffiths G."/>
            <person name="Smith M."/>
            <person name="Glithero R."/>
            <person name="Howden P."/>
            <person name="Barker N."/>
            <person name="Lloyd C."/>
            <person name="Stevens C."/>
            <person name="Harley J."/>
            <person name="Holt K."/>
            <person name="Panagiotidis G."/>
            <person name="Lovell J."/>
            <person name="Beasley H."/>
            <person name="Henderson C."/>
            <person name="Gordon D."/>
            <person name="Auger K."/>
            <person name="Wright D."/>
            <person name="Collins J."/>
            <person name="Raisen C."/>
            <person name="Dyer L."/>
            <person name="Leung K."/>
            <person name="Robertson L."/>
            <person name="Ambridge K."/>
            <person name="Leongamornlert D."/>
            <person name="McGuire S."/>
            <person name="Gilderthorp R."/>
            <person name="Griffiths C."/>
            <person name="Manthravadi D."/>
            <person name="Nichol S."/>
            <person name="Barker G."/>
            <person name="Whitehead S."/>
            <person name="Kay M."/>
            <person name="Brown J."/>
            <person name="Murnane C."/>
            <person name="Gray E."/>
            <person name="Humphries M."/>
            <person name="Sycamore N."/>
            <person name="Barker D."/>
            <person name="Saunders D."/>
            <person name="Wallis J."/>
            <person name="Babbage A."/>
            <person name="Hammond S."/>
            <person name="Mashreghi-Mohammadi M."/>
            <person name="Barr L."/>
            <person name="Martin S."/>
            <person name="Wray P."/>
            <person name="Ellington A."/>
            <person name="Matthews N."/>
            <person name="Ellwood M."/>
            <person name="Woodmansey R."/>
            <person name="Clark G."/>
            <person name="Cooper J."/>
            <person name="Tromans A."/>
            <person name="Grafham D."/>
            <person name="Skuce C."/>
            <person name="Pandian R."/>
            <person name="Andrews R."/>
            <person name="Harrison E."/>
            <person name="Kimberley A."/>
            <person name="Garnett J."/>
            <person name="Fosker N."/>
            <person name="Hall R."/>
            <person name="Garner P."/>
            <person name="Kelly D."/>
            <person name="Bird C."/>
            <person name="Palmer S."/>
            <person name="Gehring I."/>
            <person name="Berger A."/>
            <person name="Dooley C.M."/>
            <person name="Ersan-Urun Z."/>
            <person name="Eser C."/>
            <person name="Geiger H."/>
            <person name="Geisler M."/>
            <person name="Karotki L."/>
            <person name="Kirn A."/>
            <person name="Konantz J."/>
            <person name="Konantz M."/>
            <person name="Oberlander M."/>
            <person name="Rudolph-Geiger S."/>
            <person name="Teucke M."/>
            <person name="Lanz C."/>
            <person name="Raddatz G."/>
            <person name="Osoegawa K."/>
            <person name="Zhu B."/>
            <person name="Rapp A."/>
            <person name="Widaa S."/>
            <person name="Langford C."/>
            <person name="Yang F."/>
            <person name="Schuster S.C."/>
            <person name="Carter N.P."/>
            <person name="Harrow J."/>
            <person name="Ning Z."/>
            <person name="Herrero J."/>
            <person name="Searle S.M."/>
            <person name="Enright A."/>
            <person name="Geisler R."/>
            <person name="Plasterk R.H."/>
            <person name="Lee C."/>
            <person name="Westerfield M."/>
            <person name="de Jong P.J."/>
            <person name="Zon L.I."/>
            <person name="Postlethwait J.H."/>
            <person name="Nusslein-Volhard C."/>
            <person name="Hubbard T.J."/>
            <person name="Roest Crollius H."/>
            <person name="Rogers J."/>
            <person name="Stemple D.L."/>
        </authorList>
    </citation>
    <scope>NUCLEOTIDE SEQUENCE [LARGE SCALE GENOMIC DNA]</scope>
    <source>
        <strain>Tuebingen</strain>
    </source>
</reference>
<reference evidence="6" key="2">
    <citation type="submission" date="2008-04" db="EMBL/GenBank/DDBJ databases">
        <authorList>
            <consortium name="NIH - Zebrafish Gene Collection (ZGC) project"/>
        </authorList>
    </citation>
    <scope>NUCLEOTIDE SEQUENCE [LARGE SCALE MRNA]</scope>
</reference>
<reference evidence="6 7" key="3">
    <citation type="journal article" date="2005" name="J. Cell. Biochem.">
        <title>Bone morphogenetic protein-2 induces expression of murine zinc finger transcription factor ZNF450.</title>
        <authorList>
            <person name="Edgar A.J."/>
            <person name="Dover S.L."/>
            <person name="Lodrick M.N."/>
            <person name="McKay I.J."/>
            <person name="Hughes F.J."/>
            <person name="Turner W."/>
        </authorList>
    </citation>
    <scope>IDENTIFICATION</scope>
</reference>
<feature type="chain" id="PRO_0000047737" description="Zinc finger and BTB domain-containing protein 24">
    <location>
        <begin position="1"/>
        <end position="672"/>
    </location>
</feature>
<feature type="domain" description="BTB" evidence="3">
    <location>
        <begin position="39"/>
        <end position="105"/>
    </location>
</feature>
<feature type="DNA-binding region" description="A.T hook 1" evidence="2">
    <location>
        <begin position="140"/>
        <end position="152"/>
    </location>
</feature>
<feature type="DNA-binding region" description="A.T hook 2" evidence="2">
    <location>
        <begin position="223"/>
        <end position="235"/>
    </location>
</feature>
<feature type="zinc finger region" description="C2H2-type 1" evidence="4">
    <location>
        <begin position="237"/>
        <end position="259"/>
    </location>
</feature>
<feature type="zinc finger region" description="C2H2-type 2" evidence="4">
    <location>
        <begin position="265"/>
        <end position="287"/>
    </location>
</feature>
<feature type="zinc finger region" description="C2H2-type 3" evidence="4">
    <location>
        <begin position="293"/>
        <end position="315"/>
    </location>
</feature>
<feature type="zinc finger region" description="C2H2-type 4" evidence="4">
    <location>
        <begin position="321"/>
        <end position="343"/>
    </location>
</feature>
<feature type="zinc finger region" description="C2H2-type 5" evidence="4">
    <location>
        <begin position="349"/>
        <end position="371"/>
    </location>
</feature>
<feature type="zinc finger region" description="C2H2-type 6" evidence="4">
    <location>
        <begin position="377"/>
        <end position="399"/>
    </location>
</feature>
<feature type="zinc finger region" description="C2H2-type 7" evidence="4">
    <location>
        <begin position="405"/>
        <end position="427"/>
    </location>
</feature>
<feature type="zinc finger region" description="C2H2-type 8" evidence="4">
    <location>
        <begin position="433"/>
        <end position="455"/>
    </location>
</feature>
<feature type="region of interest" description="Disordered" evidence="5">
    <location>
        <begin position="136"/>
        <end position="208"/>
    </location>
</feature>
<feature type="region of interest" description="Disordered" evidence="5">
    <location>
        <begin position="453"/>
        <end position="492"/>
    </location>
</feature>
<feature type="compositionally biased region" description="Basic and acidic residues" evidence="5">
    <location>
        <begin position="148"/>
        <end position="158"/>
    </location>
</feature>
<feature type="compositionally biased region" description="Polar residues" evidence="5">
    <location>
        <begin position="160"/>
        <end position="171"/>
    </location>
</feature>
<feature type="compositionally biased region" description="Basic residues" evidence="5">
    <location>
        <begin position="198"/>
        <end position="208"/>
    </location>
</feature>
<feature type="compositionally biased region" description="Low complexity" evidence="5">
    <location>
        <begin position="476"/>
        <end position="487"/>
    </location>
</feature>
<feature type="sequence conflict" description="In Ref. 2; AAI63252." evidence="6" ref="2">
    <original>T</original>
    <variation>S</variation>
    <location>
        <position position="166"/>
    </location>
</feature>
<feature type="sequence conflict" description="In Ref. 2; AAI63252." evidence="6" ref="2">
    <original>P</original>
    <variation>PEQQ</variation>
    <location>
        <position position="475"/>
    </location>
</feature>
<name>ZBT24_DANRE</name>